<proteinExistence type="inferred from homology"/>
<comment type="function">
    <text evidence="1">Located on the platform of the 30S subunit, it bridges several disparate RNA helices of the 16S rRNA. Forms part of the Shine-Dalgarno cleft in the 70S ribosome.</text>
</comment>
<comment type="subunit">
    <text evidence="1">Part of the 30S ribosomal subunit. Interacts with proteins S7 and S18. Binds to IF-3.</text>
</comment>
<comment type="similarity">
    <text evidence="1">Belongs to the universal ribosomal protein uS11 family.</text>
</comment>
<name>RS11_LACDB</name>
<protein>
    <recommendedName>
        <fullName evidence="1">Small ribosomal subunit protein uS11</fullName>
    </recommendedName>
    <alternativeName>
        <fullName evidence="2">30S ribosomal protein S11</fullName>
    </alternativeName>
</protein>
<sequence length="129" mass="13671">MPAKKTAHKRRVKKHVESGVAHIHSTFNNTLVMITDVQGNAVAWSSAGALGFKGSRKSTPFAAQMAAEAAAKSAIDQGMKHIEVSVKGPGSGRESAIRALQAAGLEITSIRDVTPVPHNGSRPPKRRRV</sequence>
<organism>
    <name type="scientific">Lactobacillus delbrueckii subsp. bulgaricus (strain ATCC BAA-365 / Lb-18)</name>
    <dbReference type="NCBI Taxonomy" id="321956"/>
    <lineage>
        <taxon>Bacteria</taxon>
        <taxon>Bacillati</taxon>
        <taxon>Bacillota</taxon>
        <taxon>Bacilli</taxon>
        <taxon>Lactobacillales</taxon>
        <taxon>Lactobacillaceae</taxon>
        <taxon>Lactobacillus</taxon>
    </lineage>
</organism>
<feature type="chain" id="PRO_0000294776" description="Small ribosomal subunit protein uS11">
    <location>
        <begin position="1"/>
        <end position="129"/>
    </location>
</feature>
<dbReference type="EMBL" id="CP000412">
    <property type="protein sequence ID" value="ABJ58032.1"/>
    <property type="molecule type" value="Genomic_DNA"/>
</dbReference>
<dbReference type="RefSeq" id="WP_011543643.1">
    <property type="nucleotide sequence ID" value="NC_008529.1"/>
</dbReference>
<dbReference type="SMR" id="Q04BZ0"/>
<dbReference type="KEGG" id="lbu:LBUL_0375"/>
<dbReference type="HOGENOM" id="CLU_072439_5_0_9"/>
<dbReference type="BioCyc" id="LDEL321956:LBUL_RS01750-MONOMER"/>
<dbReference type="GO" id="GO:1990904">
    <property type="term" value="C:ribonucleoprotein complex"/>
    <property type="evidence" value="ECO:0007669"/>
    <property type="project" value="UniProtKB-KW"/>
</dbReference>
<dbReference type="GO" id="GO:0005840">
    <property type="term" value="C:ribosome"/>
    <property type="evidence" value="ECO:0007669"/>
    <property type="project" value="UniProtKB-KW"/>
</dbReference>
<dbReference type="GO" id="GO:0019843">
    <property type="term" value="F:rRNA binding"/>
    <property type="evidence" value="ECO:0007669"/>
    <property type="project" value="UniProtKB-UniRule"/>
</dbReference>
<dbReference type="GO" id="GO:0003735">
    <property type="term" value="F:structural constituent of ribosome"/>
    <property type="evidence" value="ECO:0007669"/>
    <property type="project" value="InterPro"/>
</dbReference>
<dbReference type="GO" id="GO:0006412">
    <property type="term" value="P:translation"/>
    <property type="evidence" value="ECO:0007669"/>
    <property type="project" value="UniProtKB-UniRule"/>
</dbReference>
<dbReference type="FunFam" id="3.30.420.80:FF:000001">
    <property type="entry name" value="30S ribosomal protein S11"/>
    <property type="match status" value="1"/>
</dbReference>
<dbReference type="Gene3D" id="3.30.420.80">
    <property type="entry name" value="Ribosomal protein S11"/>
    <property type="match status" value="1"/>
</dbReference>
<dbReference type="HAMAP" id="MF_01310">
    <property type="entry name" value="Ribosomal_uS11"/>
    <property type="match status" value="1"/>
</dbReference>
<dbReference type="InterPro" id="IPR001971">
    <property type="entry name" value="Ribosomal_uS11"/>
</dbReference>
<dbReference type="InterPro" id="IPR019981">
    <property type="entry name" value="Ribosomal_uS11_bac-type"/>
</dbReference>
<dbReference type="InterPro" id="IPR018102">
    <property type="entry name" value="Ribosomal_uS11_CS"/>
</dbReference>
<dbReference type="InterPro" id="IPR036967">
    <property type="entry name" value="Ribosomal_uS11_sf"/>
</dbReference>
<dbReference type="NCBIfam" id="NF003698">
    <property type="entry name" value="PRK05309.1"/>
    <property type="match status" value="1"/>
</dbReference>
<dbReference type="NCBIfam" id="TIGR03632">
    <property type="entry name" value="uS11_bact"/>
    <property type="match status" value="1"/>
</dbReference>
<dbReference type="PANTHER" id="PTHR11759">
    <property type="entry name" value="40S RIBOSOMAL PROTEIN S14/30S RIBOSOMAL PROTEIN S11"/>
    <property type="match status" value="1"/>
</dbReference>
<dbReference type="Pfam" id="PF00411">
    <property type="entry name" value="Ribosomal_S11"/>
    <property type="match status" value="1"/>
</dbReference>
<dbReference type="PIRSF" id="PIRSF002131">
    <property type="entry name" value="Ribosomal_S11"/>
    <property type="match status" value="1"/>
</dbReference>
<dbReference type="SUPFAM" id="SSF53137">
    <property type="entry name" value="Translational machinery components"/>
    <property type="match status" value="1"/>
</dbReference>
<dbReference type="PROSITE" id="PS00054">
    <property type="entry name" value="RIBOSOMAL_S11"/>
    <property type="match status" value="1"/>
</dbReference>
<accession>Q04BZ0</accession>
<keyword id="KW-0687">Ribonucleoprotein</keyword>
<keyword id="KW-0689">Ribosomal protein</keyword>
<keyword id="KW-0694">RNA-binding</keyword>
<keyword id="KW-0699">rRNA-binding</keyword>
<reference key="1">
    <citation type="journal article" date="2006" name="Proc. Natl. Acad. Sci. U.S.A.">
        <title>Comparative genomics of the lactic acid bacteria.</title>
        <authorList>
            <person name="Makarova K.S."/>
            <person name="Slesarev A."/>
            <person name="Wolf Y.I."/>
            <person name="Sorokin A."/>
            <person name="Mirkin B."/>
            <person name="Koonin E.V."/>
            <person name="Pavlov A."/>
            <person name="Pavlova N."/>
            <person name="Karamychev V."/>
            <person name="Polouchine N."/>
            <person name="Shakhova V."/>
            <person name="Grigoriev I."/>
            <person name="Lou Y."/>
            <person name="Rohksar D."/>
            <person name="Lucas S."/>
            <person name="Huang K."/>
            <person name="Goodstein D.M."/>
            <person name="Hawkins T."/>
            <person name="Plengvidhya V."/>
            <person name="Welker D."/>
            <person name="Hughes J."/>
            <person name="Goh Y."/>
            <person name="Benson A."/>
            <person name="Baldwin K."/>
            <person name="Lee J.-H."/>
            <person name="Diaz-Muniz I."/>
            <person name="Dosti B."/>
            <person name="Smeianov V."/>
            <person name="Wechter W."/>
            <person name="Barabote R."/>
            <person name="Lorca G."/>
            <person name="Altermann E."/>
            <person name="Barrangou R."/>
            <person name="Ganesan B."/>
            <person name="Xie Y."/>
            <person name="Rawsthorne H."/>
            <person name="Tamir D."/>
            <person name="Parker C."/>
            <person name="Breidt F."/>
            <person name="Broadbent J.R."/>
            <person name="Hutkins R."/>
            <person name="O'Sullivan D."/>
            <person name="Steele J."/>
            <person name="Unlu G."/>
            <person name="Saier M.H. Jr."/>
            <person name="Klaenhammer T."/>
            <person name="Richardson P."/>
            <person name="Kozyavkin S."/>
            <person name="Weimer B.C."/>
            <person name="Mills D.A."/>
        </authorList>
    </citation>
    <scope>NUCLEOTIDE SEQUENCE [LARGE SCALE GENOMIC DNA]</scope>
    <source>
        <strain>ATCC BAA-365 / Lb-18</strain>
    </source>
</reference>
<evidence type="ECO:0000255" key="1">
    <source>
        <dbReference type="HAMAP-Rule" id="MF_01310"/>
    </source>
</evidence>
<evidence type="ECO:0000305" key="2"/>
<gene>
    <name evidence="1" type="primary">rpsK</name>
    <name type="ordered locus">LBUL_0375</name>
</gene>